<protein>
    <recommendedName>
        <fullName>Transmembrane protein 71</fullName>
    </recommendedName>
</protein>
<feature type="chain" id="PRO_0000278284" description="Transmembrane protein 71">
    <location>
        <begin position="1"/>
        <end position="287"/>
    </location>
</feature>
<feature type="transmembrane region" description="Helical" evidence="1">
    <location>
        <begin position="218"/>
        <end position="238"/>
    </location>
</feature>
<feature type="transmembrane region" description="Helical" evidence="1">
    <location>
        <begin position="244"/>
        <end position="264"/>
    </location>
</feature>
<feature type="region of interest" description="Disordered" evidence="2">
    <location>
        <begin position="1"/>
        <end position="25"/>
    </location>
</feature>
<feature type="sequence conflict" description="In Ref. 1; BAC40519/BAE41673." evidence="3" ref="1">
    <original>V</original>
    <variation>D</variation>
    <location>
        <position position="214"/>
    </location>
</feature>
<gene>
    <name type="primary">Tmem71</name>
</gene>
<evidence type="ECO:0000255" key="1"/>
<evidence type="ECO:0000256" key="2">
    <source>
        <dbReference type="SAM" id="MobiDB-lite"/>
    </source>
</evidence>
<evidence type="ECO:0000305" key="3"/>
<accession>Q149F5</accession>
<accession>Q8C2F7</accession>
<reference key="1">
    <citation type="journal article" date="2005" name="Science">
        <title>The transcriptional landscape of the mammalian genome.</title>
        <authorList>
            <person name="Carninci P."/>
            <person name="Kasukawa T."/>
            <person name="Katayama S."/>
            <person name="Gough J."/>
            <person name="Frith M.C."/>
            <person name="Maeda N."/>
            <person name="Oyama R."/>
            <person name="Ravasi T."/>
            <person name="Lenhard B."/>
            <person name="Wells C."/>
            <person name="Kodzius R."/>
            <person name="Shimokawa K."/>
            <person name="Bajic V.B."/>
            <person name="Brenner S.E."/>
            <person name="Batalov S."/>
            <person name="Forrest A.R."/>
            <person name="Zavolan M."/>
            <person name="Davis M.J."/>
            <person name="Wilming L.G."/>
            <person name="Aidinis V."/>
            <person name="Allen J.E."/>
            <person name="Ambesi-Impiombato A."/>
            <person name="Apweiler R."/>
            <person name="Aturaliya R.N."/>
            <person name="Bailey T.L."/>
            <person name="Bansal M."/>
            <person name="Baxter L."/>
            <person name="Beisel K.W."/>
            <person name="Bersano T."/>
            <person name="Bono H."/>
            <person name="Chalk A.M."/>
            <person name="Chiu K.P."/>
            <person name="Choudhary V."/>
            <person name="Christoffels A."/>
            <person name="Clutterbuck D.R."/>
            <person name="Crowe M.L."/>
            <person name="Dalla E."/>
            <person name="Dalrymple B.P."/>
            <person name="de Bono B."/>
            <person name="Della Gatta G."/>
            <person name="di Bernardo D."/>
            <person name="Down T."/>
            <person name="Engstrom P."/>
            <person name="Fagiolini M."/>
            <person name="Faulkner G."/>
            <person name="Fletcher C.F."/>
            <person name="Fukushima T."/>
            <person name="Furuno M."/>
            <person name="Futaki S."/>
            <person name="Gariboldi M."/>
            <person name="Georgii-Hemming P."/>
            <person name="Gingeras T.R."/>
            <person name="Gojobori T."/>
            <person name="Green R.E."/>
            <person name="Gustincich S."/>
            <person name="Harbers M."/>
            <person name="Hayashi Y."/>
            <person name="Hensch T.K."/>
            <person name="Hirokawa N."/>
            <person name="Hill D."/>
            <person name="Huminiecki L."/>
            <person name="Iacono M."/>
            <person name="Ikeo K."/>
            <person name="Iwama A."/>
            <person name="Ishikawa T."/>
            <person name="Jakt M."/>
            <person name="Kanapin A."/>
            <person name="Katoh M."/>
            <person name="Kawasawa Y."/>
            <person name="Kelso J."/>
            <person name="Kitamura H."/>
            <person name="Kitano H."/>
            <person name="Kollias G."/>
            <person name="Krishnan S.P."/>
            <person name="Kruger A."/>
            <person name="Kummerfeld S.K."/>
            <person name="Kurochkin I.V."/>
            <person name="Lareau L.F."/>
            <person name="Lazarevic D."/>
            <person name="Lipovich L."/>
            <person name="Liu J."/>
            <person name="Liuni S."/>
            <person name="McWilliam S."/>
            <person name="Madan Babu M."/>
            <person name="Madera M."/>
            <person name="Marchionni L."/>
            <person name="Matsuda H."/>
            <person name="Matsuzawa S."/>
            <person name="Miki H."/>
            <person name="Mignone F."/>
            <person name="Miyake S."/>
            <person name="Morris K."/>
            <person name="Mottagui-Tabar S."/>
            <person name="Mulder N."/>
            <person name="Nakano N."/>
            <person name="Nakauchi H."/>
            <person name="Ng P."/>
            <person name="Nilsson R."/>
            <person name="Nishiguchi S."/>
            <person name="Nishikawa S."/>
            <person name="Nori F."/>
            <person name="Ohara O."/>
            <person name="Okazaki Y."/>
            <person name="Orlando V."/>
            <person name="Pang K.C."/>
            <person name="Pavan W.J."/>
            <person name="Pavesi G."/>
            <person name="Pesole G."/>
            <person name="Petrovsky N."/>
            <person name="Piazza S."/>
            <person name="Reed J."/>
            <person name="Reid J.F."/>
            <person name="Ring B.Z."/>
            <person name="Ringwald M."/>
            <person name="Rost B."/>
            <person name="Ruan Y."/>
            <person name="Salzberg S.L."/>
            <person name="Sandelin A."/>
            <person name="Schneider C."/>
            <person name="Schoenbach C."/>
            <person name="Sekiguchi K."/>
            <person name="Semple C.A."/>
            <person name="Seno S."/>
            <person name="Sessa L."/>
            <person name="Sheng Y."/>
            <person name="Shibata Y."/>
            <person name="Shimada H."/>
            <person name="Shimada K."/>
            <person name="Silva D."/>
            <person name="Sinclair B."/>
            <person name="Sperling S."/>
            <person name="Stupka E."/>
            <person name="Sugiura K."/>
            <person name="Sultana R."/>
            <person name="Takenaka Y."/>
            <person name="Taki K."/>
            <person name="Tammoja K."/>
            <person name="Tan S.L."/>
            <person name="Tang S."/>
            <person name="Taylor M.S."/>
            <person name="Tegner J."/>
            <person name="Teichmann S.A."/>
            <person name="Ueda H.R."/>
            <person name="van Nimwegen E."/>
            <person name="Verardo R."/>
            <person name="Wei C.L."/>
            <person name="Yagi K."/>
            <person name="Yamanishi H."/>
            <person name="Zabarovsky E."/>
            <person name="Zhu S."/>
            <person name="Zimmer A."/>
            <person name="Hide W."/>
            <person name="Bult C."/>
            <person name="Grimmond S.M."/>
            <person name="Teasdale R.D."/>
            <person name="Liu E.T."/>
            <person name="Brusic V."/>
            <person name="Quackenbush J."/>
            <person name="Wahlestedt C."/>
            <person name="Mattick J.S."/>
            <person name="Hume D.A."/>
            <person name="Kai C."/>
            <person name="Sasaki D."/>
            <person name="Tomaru Y."/>
            <person name="Fukuda S."/>
            <person name="Kanamori-Katayama M."/>
            <person name="Suzuki M."/>
            <person name="Aoki J."/>
            <person name="Arakawa T."/>
            <person name="Iida J."/>
            <person name="Imamura K."/>
            <person name="Itoh M."/>
            <person name="Kato T."/>
            <person name="Kawaji H."/>
            <person name="Kawagashira N."/>
            <person name="Kawashima T."/>
            <person name="Kojima M."/>
            <person name="Kondo S."/>
            <person name="Konno H."/>
            <person name="Nakano K."/>
            <person name="Ninomiya N."/>
            <person name="Nishio T."/>
            <person name="Okada M."/>
            <person name="Plessy C."/>
            <person name="Shibata K."/>
            <person name="Shiraki T."/>
            <person name="Suzuki S."/>
            <person name="Tagami M."/>
            <person name="Waki K."/>
            <person name="Watahiki A."/>
            <person name="Okamura-Oho Y."/>
            <person name="Suzuki H."/>
            <person name="Kawai J."/>
            <person name="Hayashizaki Y."/>
        </authorList>
    </citation>
    <scope>NUCLEOTIDE SEQUENCE [LARGE SCALE MRNA]</scope>
    <source>
        <strain>NOD</strain>
        <tissue>Dendritic cell</tissue>
        <tissue>Thymus</tissue>
    </source>
</reference>
<reference key="2">
    <citation type="journal article" date="2004" name="Genome Res.">
        <title>The status, quality, and expansion of the NIH full-length cDNA project: the Mammalian Gene Collection (MGC).</title>
        <authorList>
            <consortium name="The MGC Project Team"/>
        </authorList>
    </citation>
    <scope>NUCLEOTIDE SEQUENCE [LARGE SCALE MRNA]</scope>
</reference>
<comment type="subcellular location">
    <subcellularLocation>
        <location evidence="3">Membrane</location>
        <topology evidence="3">Multi-pass membrane protein</topology>
    </subcellularLocation>
</comment>
<comment type="similarity">
    <text evidence="3">Belongs to the TMEM71 family.</text>
</comment>
<sequence length="287" mass="31871">MYRDSPLMSTPVANDSRSDEGPSGKLSPTCLFPSFTCDFLDGDSSFECCSIDPLTGSHYICRRSPRLLTNGYYIWTEDSFFCDPDGHITLNPSQTSVMYKENLVRIFRKKKRTHRSLSSLLDPRASKSWLHGSIFGEVDSLPSEDLWLDGIRSLGSDLDCSLSDGWESQKPVTDTSESSSSGYILPQSLRESSQSSSLQLQVKASGHFEKNSLVHSRAGLMHKVSFQAILLAVCLVISAYTRWFVGGELASIFTCALLITIAYVVKSLFLNLARYFKATSCARFDST</sequence>
<proteinExistence type="evidence at transcript level"/>
<keyword id="KW-0472">Membrane</keyword>
<keyword id="KW-1185">Reference proteome</keyword>
<keyword id="KW-0812">Transmembrane</keyword>
<keyword id="KW-1133">Transmembrane helix</keyword>
<name>TMM71_MOUSE</name>
<dbReference type="EMBL" id="AK088711">
    <property type="protein sequence ID" value="BAC40519.1"/>
    <property type="molecule type" value="mRNA"/>
</dbReference>
<dbReference type="EMBL" id="AK170268">
    <property type="protein sequence ID" value="BAE41673.1"/>
    <property type="molecule type" value="mRNA"/>
</dbReference>
<dbReference type="EMBL" id="BC117823">
    <property type="protein sequence ID" value="AAI17824.1"/>
    <property type="molecule type" value="mRNA"/>
</dbReference>
<dbReference type="EMBL" id="BC117824">
    <property type="protein sequence ID" value="AAI17825.1"/>
    <property type="molecule type" value="mRNA"/>
</dbReference>
<dbReference type="CCDS" id="CCDS37090.1"/>
<dbReference type="RefSeq" id="NP_766102.1">
    <property type="nucleotide sequence ID" value="NM_172514.3"/>
</dbReference>
<dbReference type="SMR" id="Q149F5"/>
<dbReference type="BioGRID" id="229396">
    <property type="interactions" value="1"/>
</dbReference>
<dbReference type="FunCoup" id="Q149F5">
    <property type="interactions" value="414"/>
</dbReference>
<dbReference type="STRING" id="10090.ENSMUSP00000044493"/>
<dbReference type="iPTMnet" id="Q149F5"/>
<dbReference type="PhosphoSitePlus" id="Q149F5"/>
<dbReference type="jPOST" id="Q149F5"/>
<dbReference type="PaxDb" id="10090-ENSMUSP00000044493"/>
<dbReference type="ProteomicsDB" id="259431"/>
<dbReference type="DNASU" id="213068"/>
<dbReference type="GeneID" id="213068"/>
<dbReference type="KEGG" id="mmu:213068"/>
<dbReference type="UCSC" id="uc007wad.1">
    <property type="organism name" value="mouse"/>
</dbReference>
<dbReference type="AGR" id="MGI:2146049"/>
<dbReference type="CTD" id="137835"/>
<dbReference type="MGI" id="MGI:2146049">
    <property type="gene designation" value="Tmem71"/>
</dbReference>
<dbReference type="eggNOG" id="ENOG502RZWR">
    <property type="taxonomic scope" value="Eukaryota"/>
</dbReference>
<dbReference type="InParanoid" id="Q149F5"/>
<dbReference type="OrthoDB" id="8961338at2759"/>
<dbReference type="PhylomeDB" id="Q149F5"/>
<dbReference type="TreeFam" id="TF337383"/>
<dbReference type="BioGRID-ORCS" id="213068">
    <property type="hits" value="2 hits in 77 CRISPR screens"/>
</dbReference>
<dbReference type="ChiTaRS" id="Tmem71">
    <property type="organism name" value="mouse"/>
</dbReference>
<dbReference type="PRO" id="PR:Q149F5"/>
<dbReference type="Proteomes" id="UP000000589">
    <property type="component" value="Unplaced"/>
</dbReference>
<dbReference type="RNAct" id="Q149F5">
    <property type="molecule type" value="protein"/>
</dbReference>
<dbReference type="GO" id="GO:0016020">
    <property type="term" value="C:membrane"/>
    <property type="evidence" value="ECO:0007669"/>
    <property type="project" value="UniProtKB-SubCell"/>
</dbReference>
<dbReference type="InterPro" id="IPR027975">
    <property type="entry name" value="TMEM71"/>
</dbReference>
<dbReference type="PANTHER" id="PTHR35255">
    <property type="entry name" value="TRANSMEMBRANE PROTEIN 71"/>
    <property type="match status" value="1"/>
</dbReference>
<dbReference type="PANTHER" id="PTHR35255:SF1">
    <property type="entry name" value="TRANSMEMBRANE PROTEIN 71"/>
    <property type="match status" value="1"/>
</dbReference>
<dbReference type="Pfam" id="PF15121">
    <property type="entry name" value="TMEM71"/>
    <property type="match status" value="1"/>
</dbReference>
<organism>
    <name type="scientific">Mus musculus</name>
    <name type="common">Mouse</name>
    <dbReference type="NCBI Taxonomy" id="10090"/>
    <lineage>
        <taxon>Eukaryota</taxon>
        <taxon>Metazoa</taxon>
        <taxon>Chordata</taxon>
        <taxon>Craniata</taxon>
        <taxon>Vertebrata</taxon>
        <taxon>Euteleostomi</taxon>
        <taxon>Mammalia</taxon>
        <taxon>Eutheria</taxon>
        <taxon>Euarchontoglires</taxon>
        <taxon>Glires</taxon>
        <taxon>Rodentia</taxon>
        <taxon>Myomorpha</taxon>
        <taxon>Muroidea</taxon>
        <taxon>Muridae</taxon>
        <taxon>Murinae</taxon>
        <taxon>Mus</taxon>
        <taxon>Mus</taxon>
    </lineage>
</organism>